<proteinExistence type="inferred from homology"/>
<comment type="similarity">
    <text evidence="1">Belongs to the bacterial ribosomal protein bL35 family.</text>
</comment>
<reference key="1">
    <citation type="journal article" date="2004" name="Nat. Genet.">
        <title>Evidence in the Legionella pneumophila genome for exploitation of host cell functions and high genome plasticity.</title>
        <authorList>
            <person name="Cazalet C."/>
            <person name="Rusniok C."/>
            <person name="Brueggemann H."/>
            <person name="Zidane N."/>
            <person name="Magnier A."/>
            <person name="Ma L."/>
            <person name="Tichit M."/>
            <person name="Jarraud S."/>
            <person name="Bouchier C."/>
            <person name="Vandenesch F."/>
            <person name="Kunst F."/>
            <person name="Etienne J."/>
            <person name="Glaser P."/>
            <person name="Buchrieser C."/>
        </authorList>
    </citation>
    <scope>NUCLEOTIDE SEQUENCE [LARGE SCALE GENOMIC DNA]</scope>
    <source>
        <strain>Lens</strain>
    </source>
</reference>
<dbReference type="EMBL" id="CR628337">
    <property type="protein sequence ID" value="CAH16882.1"/>
    <property type="molecule type" value="Genomic_DNA"/>
</dbReference>
<dbReference type="RefSeq" id="WP_011216579.1">
    <property type="nucleotide sequence ID" value="NC_006369.1"/>
</dbReference>
<dbReference type="SMR" id="Q5WT84"/>
<dbReference type="GeneID" id="57036714"/>
<dbReference type="KEGG" id="lpf:lpl2641"/>
<dbReference type="LegioList" id="lpl2641"/>
<dbReference type="HOGENOM" id="CLU_169643_1_1_6"/>
<dbReference type="Proteomes" id="UP000002517">
    <property type="component" value="Chromosome"/>
</dbReference>
<dbReference type="GO" id="GO:0022625">
    <property type="term" value="C:cytosolic large ribosomal subunit"/>
    <property type="evidence" value="ECO:0007669"/>
    <property type="project" value="TreeGrafter"/>
</dbReference>
<dbReference type="GO" id="GO:0003735">
    <property type="term" value="F:structural constituent of ribosome"/>
    <property type="evidence" value="ECO:0007669"/>
    <property type="project" value="InterPro"/>
</dbReference>
<dbReference type="GO" id="GO:0006412">
    <property type="term" value="P:translation"/>
    <property type="evidence" value="ECO:0007669"/>
    <property type="project" value="UniProtKB-UniRule"/>
</dbReference>
<dbReference type="FunFam" id="4.10.410.60:FF:000001">
    <property type="entry name" value="50S ribosomal protein L35"/>
    <property type="match status" value="1"/>
</dbReference>
<dbReference type="Gene3D" id="4.10.410.60">
    <property type="match status" value="1"/>
</dbReference>
<dbReference type="HAMAP" id="MF_00514">
    <property type="entry name" value="Ribosomal_bL35"/>
    <property type="match status" value="1"/>
</dbReference>
<dbReference type="InterPro" id="IPR001706">
    <property type="entry name" value="Ribosomal_bL35"/>
</dbReference>
<dbReference type="InterPro" id="IPR021137">
    <property type="entry name" value="Ribosomal_bL35-like"/>
</dbReference>
<dbReference type="InterPro" id="IPR018265">
    <property type="entry name" value="Ribosomal_bL35_CS"/>
</dbReference>
<dbReference type="InterPro" id="IPR037229">
    <property type="entry name" value="Ribosomal_bL35_sf"/>
</dbReference>
<dbReference type="NCBIfam" id="TIGR00001">
    <property type="entry name" value="rpmI_bact"/>
    <property type="match status" value="1"/>
</dbReference>
<dbReference type="PANTHER" id="PTHR33343">
    <property type="entry name" value="54S RIBOSOMAL PROTEIN BL35M"/>
    <property type="match status" value="1"/>
</dbReference>
<dbReference type="PANTHER" id="PTHR33343:SF1">
    <property type="entry name" value="LARGE RIBOSOMAL SUBUNIT PROTEIN BL35M"/>
    <property type="match status" value="1"/>
</dbReference>
<dbReference type="Pfam" id="PF01632">
    <property type="entry name" value="Ribosomal_L35p"/>
    <property type="match status" value="1"/>
</dbReference>
<dbReference type="PRINTS" id="PR00064">
    <property type="entry name" value="RIBOSOMALL35"/>
</dbReference>
<dbReference type="SUPFAM" id="SSF143034">
    <property type="entry name" value="L35p-like"/>
    <property type="match status" value="1"/>
</dbReference>
<dbReference type="PROSITE" id="PS00936">
    <property type="entry name" value="RIBOSOMAL_L35"/>
    <property type="match status" value="1"/>
</dbReference>
<accession>Q5WT84</accession>
<organism>
    <name type="scientific">Legionella pneumophila (strain Lens)</name>
    <dbReference type="NCBI Taxonomy" id="297245"/>
    <lineage>
        <taxon>Bacteria</taxon>
        <taxon>Pseudomonadati</taxon>
        <taxon>Pseudomonadota</taxon>
        <taxon>Gammaproteobacteria</taxon>
        <taxon>Legionellales</taxon>
        <taxon>Legionellaceae</taxon>
        <taxon>Legionella</taxon>
    </lineage>
</organism>
<gene>
    <name evidence="1" type="primary">rpmI</name>
    <name type="ordered locus">lpl2641</name>
</gene>
<protein>
    <recommendedName>
        <fullName evidence="1">Large ribosomal subunit protein bL35</fullName>
    </recommendedName>
    <alternativeName>
        <fullName evidence="3">50S ribosomal protein L35</fullName>
    </alternativeName>
</protein>
<evidence type="ECO:0000255" key="1">
    <source>
        <dbReference type="HAMAP-Rule" id="MF_00514"/>
    </source>
</evidence>
<evidence type="ECO:0000256" key="2">
    <source>
        <dbReference type="SAM" id="MobiDB-lite"/>
    </source>
</evidence>
<evidence type="ECO:0000305" key="3"/>
<keyword id="KW-0687">Ribonucleoprotein</keyword>
<keyword id="KW-0689">Ribosomal protein</keyword>
<sequence>MPKLKSHRGAAKRFRKTASGAIKRRGAYRNHILTKKSTKQKRHLRVEAGTLKPCDARLAERMLHGS</sequence>
<feature type="chain" id="PRO_0000258695" description="Large ribosomal subunit protein bL35">
    <location>
        <begin position="1"/>
        <end position="66"/>
    </location>
</feature>
<feature type="region of interest" description="Disordered" evidence="2">
    <location>
        <begin position="1"/>
        <end position="48"/>
    </location>
</feature>
<feature type="compositionally biased region" description="Basic residues" evidence="2">
    <location>
        <begin position="1"/>
        <end position="44"/>
    </location>
</feature>
<name>RL35_LEGPL</name>